<evidence type="ECO:0000250" key="1">
    <source>
        <dbReference type="UniProtKB" id="P09960"/>
    </source>
</evidence>
<evidence type="ECO:0000305" key="2"/>
<accession>Q3SZH7</accession>
<name>LKHA4_BOVIN</name>
<proteinExistence type="evidence at transcript level"/>
<gene>
    <name type="primary">LTA4H</name>
</gene>
<reference key="1">
    <citation type="submission" date="2005-08" db="EMBL/GenBank/DDBJ databases">
        <authorList>
            <consortium name="NIH - Mammalian Gene Collection (MGC) project"/>
        </authorList>
    </citation>
    <scope>NUCLEOTIDE SEQUENCE [LARGE SCALE MRNA]</scope>
    <source>
        <strain>Crossbred X Angus</strain>
        <tissue>Liver</tissue>
    </source>
</reference>
<feature type="chain" id="PRO_0000244880" description="Leukotriene A-4 hydrolase">
    <location>
        <begin position="1"/>
        <end position="611"/>
    </location>
</feature>
<feature type="active site" description="Proton acceptor" evidence="1">
    <location>
        <position position="297"/>
    </location>
</feature>
<feature type="active site" description="Proton donor" evidence="1">
    <location>
        <position position="384"/>
    </location>
</feature>
<feature type="binding site" evidence="1">
    <location>
        <begin position="135"/>
        <end position="137"/>
    </location>
    <ligand>
        <name>a peptide</name>
        <dbReference type="ChEBI" id="CHEBI:60466"/>
    </ligand>
</feature>
<feature type="binding site" evidence="1">
    <location>
        <begin position="267"/>
        <end position="272"/>
    </location>
    <ligand>
        <name>a peptide</name>
        <dbReference type="ChEBI" id="CHEBI:60466"/>
    </ligand>
</feature>
<feature type="binding site" evidence="1">
    <location>
        <position position="296"/>
    </location>
    <ligand>
        <name>Zn(2+)</name>
        <dbReference type="ChEBI" id="CHEBI:29105"/>
        <note>catalytic</note>
    </ligand>
</feature>
<feature type="binding site" evidence="1">
    <location>
        <position position="300"/>
    </location>
    <ligand>
        <name>Zn(2+)</name>
        <dbReference type="ChEBI" id="CHEBI:29105"/>
        <note>catalytic</note>
    </ligand>
</feature>
<feature type="binding site" evidence="1">
    <location>
        <position position="319"/>
    </location>
    <ligand>
        <name>Zn(2+)</name>
        <dbReference type="ChEBI" id="CHEBI:29105"/>
        <note>catalytic</note>
    </ligand>
</feature>
<feature type="binding site" evidence="1">
    <location>
        <begin position="564"/>
        <end position="566"/>
    </location>
    <ligand>
        <name>a peptide</name>
        <dbReference type="ChEBI" id="CHEBI:60466"/>
    </ligand>
</feature>
<feature type="site" description="Essential for epoxide hydrolase activity, but not for aminopeptidase activity" evidence="1">
    <location>
        <position position="376"/>
    </location>
</feature>
<feature type="site" description="Covalently modified during suicide inhibition by leukotrienes" evidence="1">
    <location>
        <position position="379"/>
    </location>
</feature>
<feature type="modified residue" description="N6-acetyllysine" evidence="1">
    <location>
        <position position="73"/>
    </location>
</feature>
<feature type="modified residue" description="N6-acetyllysine" evidence="1">
    <location>
        <position position="337"/>
    </location>
</feature>
<feature type="modified residue" description="N6-acetyllysine" evidence="1">
    <location>
        <position position="414"/>
    </location>
</feature>
<feature type="modified residue" description="Phosphoserine" evidence="1">
    <location>
        <position position="416"/>
    </location>
</feature>
<feature type="modified residue" description="N6-acetyllysine" evidence="1">
    <location>
        <position position="573"/>
    </location>
</feature>
<organism>
    <name type="scientific">Bos taurus</name>
    <name type="common">Bovine</name>
    <dbReference type="NCBI Taxonomy" id="9913"/>
    <lineage>
        <taxon>Eukaryota</taxon>
        <taxon>Metazoa</taxon>
        <taxon>Chordata</taxon>
        <taxon>Craniata</taxon>
        <taxon>Vertebrata</taxon>
        <taxon>Euteleostomi</taxon>
        <taxon>Mammalia</taxon>
        <taxon>Eutheria</taxon>
        <taxon>Laurasiatheria</taxon>
        <taxon>Artiodactyla</taxon>
        <taxon>Ruminantia</taxon>
        <taxon>Pecora</taxon>
        <taxon>Bovidae</taxon>
        <taxon>Bovinae</taxon>
        <taxon>Bos</taxon>
    </lineage>
</organism>
<keyword id="KW-0007">Acetylation</keyword>
<keyword id="KW-0963">Cytoplasm</keyword>
<keyword id="KW-0378">Hydrolase</keyword>
<keyword id="KW-0434">Leukotriene biosynthesis</keyword>
<keyword id="KW-0479">Metal-binding</keyword>
<keyword id="KW-0482">Metalloprotease</keyword>
<keyword id="KW-0597">Phosphoprotein</keyword>
<keyword id="KW-0645">Protease</keyword>
<keyword id="KW-1185">Reference proteome</keyword>
<keyword id="KW-0862">Zinc</keyword>
<dbReference type="EC" id="3.3.2.6" evidence="1"/>
<dbReference type="EC" id="3.4.11.4" evidence="1"/>
<dbReference type="EMBL" id="BC102852">
    <property type="protein sequence ID" value="AAI02853.1"/>
    <property type="molecule type" value="mRNA"/>
</dbReference>
<dbReference type="RefSeq" id="NP_001029452.1">
    <property type="nucleotide sequence ID" value="NM_001034280.1"/>
</dbReference>
<dbReference type="SMR" id="Q3SZH7"/>
<dbReference type="FunCoup" id="Q3SZH7">
    <property type="interactions" value="2728"/>
</dbReference>
<dbReference type="STRING" id="9913.ENSBTAP00000021833"/>
<dbReference type="MEROPS" id="M01.004"/>
<dbReference type="PaxDb" id="9913-ENSBTAP00000021833"/>
<dbReference type="Ensembl" id="ENSBTAT00000021833.7">
    <property type="protein sequence ID" value="ENSBTAP00000021833.5"/>
    <property type="gene ID" value="ENSBTAG00000016415.7"/>
</dbReference>
<dbReference type="GeneID" id="507130"/>
<dbReference type="KEGG" id="bta:507130"/>
<dbReference type="CTD" id="4048"/>
<dbReference type="VEuPathDB" id="HostDB:ENSBTAG00000016415"/>
<dbReference type="VGNC" id="VGNC:31067">
    <property type="gene designation" value="LTA4H"/>
</dbReference>
<dbReference type="eggNOG" id="KOG1047">
    <property type="taxonomic scope" value="Eukaryota"/>
</dbReference>
<dbReference type="GeneTree" id="ENSGT00940000156375"/>
<dbReference type="HOGENOM" id="CLU_014505_0_0_1"/>
<dbReference type="InParanoid" id="Q3SZH7"/>
<dbReference type="OMA" id="CTALQWM"/>
<dbReference type="OrthoDB" id="79562at2759"/>
<dbReference type="TreeFam" id="TF300758"/>
<dbReference type="Reactome" id="R-BTA-2142691">
    <property type="pathway name" value="Synthesis of Leukotrienes (LT) and Eoxins (EX)"/>
</dbReference>
<dbReference type="Reactome" id="R-BTA-6798695">
    <property type="pathway name" value="Neutrophil degranulation"/>
</dbReference>
<dbReference type="Reactome" id="R-BTA-9018676">
    <property type="pathway name" value="Biosynthesis of D-series resolvins"/>
</dbReference>
<dbReference type="Reactome" id="R-BTA-9018681">
    <property type="pathway name" value="Biosynthesis of protectins"/>
</dbReference>
<dbReference type="Reactome" id="R-BTA-9018896">
    <property type="pathway name" value="Biosynthesis of E-series 18(S)-resolvins"/>
</dbReference>
<dbReference type="Reactome" id="R-BTA-9020265">
    <property type="pathway name" value="Biosynthesis of aspirin-triggered D-series resolvins"/>
</dbReference>
<dbReference type="Reactome" id="R-BTA-9023661">
    <property type="pathway name" value="Biosynthesis of E-series 18(R)-resolvins"/>
</dbReference>
<dbReference type="UniPathway" id="UPA00878"/>
<dbReference type="Proteomes" id="UP000009136">
    <property type="component" value="Chromosome 5"/>
</dbReference>
<dbReference type="Bgee" id="ENSBTAG00000016415">
    <property type="expression patterns" value="Expressed in duodenum and 103 other cell types or tissues"/>
</dbReference>
<dbReference type="GO" id="GO:0005829">
    <property type="term" value="C:cytosol"/>
    <property type="evidence" value="ECO:0000318"/>
    <property type="project" value="GO_Central"/>
</dbReference>
<dbReference type="GO" id="GO:0005634">
    <property type="term" value="C:nucleus"/>
    <property type="evidence" value="ECO:0000318"/>
    <property type="project" value="GO_Central"/>
</dbReference>
<dbReference type="GO" id="GO:0004177">
    <property type="term" value="F:aminopeptidase activity"/>
    <property type="evidence" value="ECO:0000250"/>
    <property type="project" value="UniProtKB"/>
</dbReference>
<dbReference type="GO" id="GO:0004301">
    <property type="term" value="F:epoxide hydrolase activity"/>
    <property type="evidence" value="ECO:0000250"/>
    <property type="project" value="UniProtKB"/>
</dbReference>
<dbReference type="GO" id="GO:0004463">
    <property type="term" value="F:leukotriene-A4 hydrolase activity"/>
    <property type="evidence" value="ECO:0000250"/>
    <property type="project" value="UniProtKB"/>
</dbReference>
<dbReference type="GO" id="GO:0008237">
    <property type="term" value="F:metallopeptidase activity"/>
    <property type="evidence" value="ECO:0007669"/>
    <property type="project" value="UniProtKB-KW"/>
</dbReference>
<dbReference type="GO" id="GO:0045148">
    <property type="term" value="F:tripeptide aminopeptidase activity"/>
    <property type="evidence" value="ECO:0007669"/>
    <property type="project" value="UniProtKB-EC"/>
</dbReference>
<dbReference type="GO" id="GO:0008270">
    <property type="term" value="F:zinc ion binding"/>
    <property type="evidence" value="ECO:0000250"/>
    <property type="project" value="UniProtKB"/>
</dbReference>
<dbReference type="GO" id="GO:0019370">
    <property type="term" value="P:leukotriene biosynthetic process"/>
    <property type="evidence" value="ECO:0000250"/>
    <property type="project" value="UniProtKB"/>
</dbReference>
<dbReference type="GO" id="GO:0043171">
    <property type="term" value="P:peptide catabolic process"/>
    <property type="evidence" value="ECO:0000250"/>
    <property type="project" value="UniProtKB"/>
</dbReference>
<dbReference type="GO" id="GO:0006508">
    <property type="term" value="P:proteolysis"/>
    <property type="evidence" value="ECO:0007669"/>
    <property type="project" value="UniProtKB-KW"/>
</dbReference>
<dbReference type="CDD" id="cd09599">
    <property type="entry name" value="M1_LTA4H"/>
    <property type="match status" value="1"/>
</dbReference>
<dbReference type="FunFam" id="1.10.390.10:FF:000003">
    <property type="entry name" value="Leukotriene A(4) hydrolase"/>
    <property type="match status" value="1"/>
</dbReference>
<dbReference type="FunFam" id="1.25.40.320:FF:000002">
    <property type="entry name" value="Leukotriene A(4) hydrolase"/>
    <property type="match status" value="1"/>
</dbReference>
<dbReference type="FunFam" id="2.60.40.1730:FF:000004">
    <property type="entry name" value="Leukotriene A(4) hydrolase"/>
    <property type="match status" value="1"/>
</dbReference>
<dbReference type="FunFam" id="3.30.2010.30:FF:000001">
    <property type="entry name" value="Leukotriene A(4) hydrolase"/>
    <property type="match status" value="1"/>
</dbReference>
<dbReference type="Gene3D" id="3.30.2010.30">
    <property type="match status" value="1"/>
</dbReference>
<dbReference type="Gene3D" id="1.10.390.10">
    <property type="entry name" value="Neutral Protease Domain 2"/>
    <property type="match status" value="1"/>
</dbReference>
<dbReference type="Gene3D" id="1.25.40.320">
    <property type="entry name" value="Peptidase M1, leukotriene A4 hydrolase/aminopeptidase C-terminal domain"/>
    <property type="match status" value="1"/>
</dbReference>
<dbReference type="Gene3D" id="2.60.40.1730">
    <property type="entry name" value="tricorn interacting facor f3 domain"/>
    <property type="match status" value="1"/>
</dbReference>
<dbReference type="InterPro" id="IPR045357">
    <property type="entry name" value="Aminopeptidase_N-like_N"/>
</dbReference>
<dbReference type="InterPro" id="IPR042097">
    <property type="entry name" value="Aminopeptidase_N-like_N_sf"/>
</dbReference>
<dbReference type="InterPro" id="IPR016024">
    <property type="entry name" value="ARM-type_fold"/>
</dbReference>
<dbReference type="InterPro" id="IPR012777">
    <property type="entry name" value="LTA4H"/>
</dbReference>
<dbReference type="InterPro" id="IPR049980">
    <property type="entry name" value="LTA4H_cat"/>
</dbReference>
<dbReference type="InterPro" id="IPR038502">
    <property type="entry name" value="M1_LTA-4_hydro/amino_C_sf"/>
</dbReference>
<dbReference type="InterPro" id="IPR034015">
    <property type="entry name" value="M1_LTA4H"/>
</dbReference>
<dbReference type="InterPro" id="IPR001930">
    <property type="entry name" value="Peptidase_M1"/>
</dbReference>
<dbReference type="InterPro" id="IPR015211">
    <property type="entry name" value="Peptidase_M1_C"/>
</dbReference>
<dbReference type="InterPro" id="IPR014782">
    <property type="entry name" value="Peptidase_M1_dom"/>
</dbReference>
<dbReference type="InterPro" id="IPR027268">
    <property type="entry name" value="Peptidase_M4/M1_CTD_sf"/>
</dbReference>
<dbReference type="NCBIfam" id="TIGR02411">
    <property type="entry name" value="leuko_A4_hydro"/>
    <property type="match status" value="1"/>
</dbReference>
<dbReference type="PANTHER" id="PTHR45726">
    <property type="entry name" value="LEUKOTRIENE A-4 HYDROLASE"/>
    <property type="match status" value="1"/>
</dbReference>
<dbReference type="PANTHER" id="PTHR45726:SF3">
    <property type="entry name" value="LEUKOTRIENE A-4 HYDROLASE"/>
    <property type="match status" value="1"/>
</dbReference>
<dbReference type="Pfam" id="PF09127">
    <property type="entry name" value="Leuk-A4-hydro_C"/>
    <property type="match status" value="1"/>
</dbReference>
<dbReference type="Pfam" id="PF01433">
    <property type="entry name" value="Peptidase_M1"/>
    <property type="match status" value="1"/>
</dbReference>
<dbReference type="Pfam" id="PF17900">
    <property type="entry name" value="Peptidase_M1_N"/>
    <property type="match status" value="1"/>
</dbReference>
<dbReference type="PRINTS" id="PR00756">
    <property type="entry name" value="ALADIPTASE"/>
</dbReference>
<dbReference type="SMART" id="SM01263">
    <property type="entry name" value="Leuk-A4-hydro_C"/>
    <property type="match status" value="1"/>
</dbReference>
<dbReference type="SUPFAM" id="SSF48371">
    <property type="entry name" value="ARM repeat"/>
    <property type="match status" value="1"/>
</dbReference>
<dbReference type="SUPFAM" id="SSF63737">
    <property type="entry name" value="Leukotriene A4 hydrolase N-terminal domain"/>
    <property type="match status" value="1"/>
</dbReference>
<dbReference type="SUPFAM" id="SSF55486">
    <property type="entry name" value="Metalloproteases ('zincins'), catalytic domain"/>
    <property type="match status" value="1"/>
</dbReference>
<dbReference type="PROSITE" id="PS00142">
    <property type="entry name" value="ZINC_PROTEASE"/>
    <property type="match status" value="1"/>
</dbReference>
<sequence>MPEVVDTCSLASPASVCQTKHLHLRCSIDFTRRVLSGTAALTIQSQEDNLRSLILDTKDLTIEKVVINGQEVKYTLGERQSYKGSPIEISLPIALCKNQEIVIEISFETSPKSSALQWLTPEQTSGKEHPYLFSQCQAIHCRAILPCQDTPSVKLTYSAEVSVPKELVALMSAIRDGEAPDPEDPNRKIYRFSQKVPIPCYLIALVVGALESRQIGPRTLVWSEKEQVEKSAYEFSETESMLKIAEDLGGPYIWGQYDLLVLPPSFPYGGMENPCLTFVTPTLLAGDKSLSNVIAHEISHSWTGNLVTNKTWDHFWLNEGHTVYLERHICGRLFGEKFRHFHALGGWGELQNSIKTFGETHPFTKLVVDLTNTDPDVAYSSVPYEKGFALLFYLEQLLGGPEVFLGFLKAYVEKFSYKSITTDNWKDFLYSHFKDKVDILNQVDWNTWLYSPGLPPVKPNYDMTLTNACISLSQRWITAKDDDLNSFSSADLKDFSSHQVNEFLAQMLQNAPLPLGHIKRMQEVYNFNAINNSEIRFRWLRLCIQSKWEEAIPLALKMATEQGRMKFTRPLFKDLAAFDKSHDQAIRTYKEHKASMHPVTAMLVGKDLKVD</sequence>
<protein>
    <recommendedName>
        <fullName>Leukotriene A-4 hydrolase</fullName>
        <shortName>LTA-4 hydrolase</shortName>
        <ecNumber evidence="1">3.3.2.6</ecNumber>
    </recommendedName>
    <alternativeName>
        <fullName>Leukotriene A(4) hydrolase</fullName>
    </alternativeName>
    <alternativeName>
        <fullName>Tripeptide aminopeptidase LTA4H</fullName>
        <ecNumber evidence="1">3.4.11.4</ecNumber>
    </alternativeName>
</protein>
<comment type="function">
    <text evidence="1">Bifunctional zinc metalloenzyme that comprises both epoxide hydrolase (EH) and aminopeptidase activities. Acts as an epoxide hydrolase to catalyze the conversion of LTA4 to the pro-inflammatory mediator leukotriene B4 (LTB4). Also has aminopeptidase activity, with high affinity for N-terminal arginines of various synthetic tripeptides. In addition to its pro-inflammatory EH activity, may also counteract inflammation by its aminopeptidase activity, which inactivates by cleavage another neutrophil attractant, the tripeptide Pro-Gly-Pro (PGP), a bioactive fragment of collagen generated by the action of matrix metalloproteinase-9 (MMP9) and prolylendopeptidase (PREPL). Involved also in the biosynthesis of resolvin E1 and 18S-resolvin E1 from eicosapentaenoic acid, two lipid mediators that show potent anti-inflammatory and pro-resolving actions.</text>
</comment>
<comment type="catalytic activity">
    <reaction evidence="1">
        <text>leukotriene A4 + H2O = leukotriene B4</text>
        <dbReference type="Rhea" id="RHEA:22324"/>
        <dbReference type="ChEBI" id="CHEBI:15377"/>
        <dbReference type="ChEBI" id="CHEBI:57461"/>
        <dbReference type="ChEBI" id="CHEBI:57463"/>
        <dbReference type="EC" id="3.3.2.6"/>
    </reaction>
    <physiologicalReaction direction="left-to-right" evidence="1">
        <dbReference type="Rhea" id="RHEA:22325"/>
    </physiologicalReaction>
</comment>
<comment type="catalytic activity">
    <reaction evidence="1">
        <text>(5S,6S)-epoxy-(18R)-hydroxy-(7E,9E,11Z,14Z,16E)-eicosapentaenoate + H2O = resolvin E1</text>
        <dbReference type="Rhea" id="RHEA:50272"/>
        <dbReference type="ChEBI" id="CHEBI:15377"/>
        <dbReference type="ChEBI" id="CHEBI:91000"/>
        <dbReference type="ChEBI" id="CHEBI:132219"/>
    </reaction>
    <physiologicalReaction direction="left-to-right" evidence="1">
        <dbReference type="Rhea" id="RHEA:50273"/>
    </physiologicalReaction>
</comment>
<comment type="catalytic activity">
    <reaction evidence="1">
        <text>(5S,6S)-epoxy-(18S)-hydroxy-(7E,9E,11Z,14Z,16E)-eicosapentaenoate + H2O = 18S-resolvin E1</text>
        <dbReference type="Rhea" id="RHEA:51988"/>
        <dbReference type="ChEBI" id="CHEBI:15377"/>
        <dbReference type="ChEBI" id="CHEBI:134661"/>
        <dbReference type="ChEBI" id="CHEBI:136057"/>
    </reaction>
    <physiologicalReaction direction="left-to-right" evidence="1">
        <dbReference type="Rhea" id="RHEA:51989"/>
    </physiologicalReaction>
</comment>
<comment type="catalytic activity">
    <reaction evidence="1">
        <text>Release of the N-terminal residue from a tripeptide.</text>
        <dbReference type="EC" id="3.4.11.4"/>
    </reaction>
</comment>
<comment type="cofactor">
    <cofactor evidence="1">
        <name>Zn(2+)</name>
        <dbReference type="ChEBI" id="CHEBI:29105"/>
    </cofactor>
    <text evidence="1">Binds 1 zinc ion per subunit.</text>
</comment>
<comment type="activity regulation">
    <text evidence="1">Inhibited by bestatin. The epoxide hydrolase activity is restrained by suicide inactivation that involves binding of LTA4 to Tyr-379. 4-(4-benzylphenyl)thiazol-2-amine (ARM1) selectively inhibits the epoxide hydrolase activity.</text>
</comment>
<comment type="pathway">
    <text evidence="1">Lipid metabolism; leukotriene B4 biosynthesis.</text>
</comment>
<comment type="subunit">
    <text evidence="1">Monomer.</text>
</comment>
<comment type="subcellular location">
    <subcellularLocation>
        <location evidence="1">Cytoplasm</location>
    </subcellularLocation>
</comment>
<comment type="PTM">
    <text evidence="1">Phosphorylation at Ser-416 inhibits leukotriene-A4 hydrolase activity. activity.</text>
</comment>
<comment type="similarity">
    <text evidence="2">Belongs to the peptidase M1 family.</text>
</comment>